<name>CUSB_ECOLI</name>
<keyword id="KW-0002">3D-structure</keyword>
<keyword id="KW-0186">Copper</keyword>
<keyword id="KW-0187">Copper transport</keyword>
<keyword id="KW-0406">Ion transport</keyword>
<keyword id="KW-1185">Reference proteome</keyword>
<keyword id="KW-0732">Signal</keyword>
<keyword id="KW-0813">Transport</keyword>
<proteinExistence type="evidence at protein level"/>
<reference key="1">
    <citation type="journal article" date="1996" name="DNA Res.">
        <title>A 718-kb DNA sequence of the Escherichia coli K-12 genome corresponding to the 12.7-28.0 min region on the linkage map.</title>
        <authorList>
            <person name="Oshima T."/>
            <person name="Aiba H."/>
            <person name="Baba T."/>
            <person name="Fujita K."/>
            <person name="Hayashi K."/>
            <person name="Honjo A."/>
            <person name="Ikemoto K."/>
            <person name="Inada T."/>
            <person name="Itoh T."/>
            <person name="Kajihara M."/>
            <person name="Kanai K."/>
            <person name="Kashimoto K."/>
            <person name="Kimura S."/>
            <person name="Kitagawa M."/>
            <person name="Makino K."/>
            <person name="Masuda S."/>
            <person name="Miki T."/>
            <person name="Mizobuchi K."/>
            <person name="Mori H."/>
            <person name="Motomura K."/>
            <person name="Nakamura Y."/>
            <person name="Nashimoto H."/>
            <person name="Nishio Y."/>
            <person name="Saito N."/>
            <person name="Sampei G."/>
            <person name="Seki Y."/>
            <person name="Tagami H."/>
            <person name="Takemoto K."/>
            <person name="Wada C."/>
            <person name="Yamamoto Y."/>
            <person name="Yano M."/>
            <person name="Horiuchi T."/>
        </authorList>
    </citation>
    <scope>NUCLEOTIDE SEQUENCE [LARGE SCALE GENOMIC DNA]</scope>
    <source>
        <strain>K12 / W3110 / ATCC 27325 / DSM 5911</strain>
    </source>
</reference>
<reference key="2">
    <citation type="submission" date="1997-01" db="EMBL/GenBank/DDBJ databases">
        <title>Sequence of minutes 4-25 of Escherichia coli.</title>
        <authorList>
            <person name="Chung E."/>
            <person name="Allen E."/>
            <person name="Araujo R."/>
            <person name="Aparicio A.M."/>
            <person name="Davis K."/>
            <person name="Duncan M."/>
            <person name="Federspiel N."/>
            <person name="Hyman R."/>
            <person name="Kalman S."/>
            <person name="Komp C."/>
            <person name="Kurdi O."/>
            <person name="Lew H."/>
            <person name="Lin D."/>
            <person name="Namath A."/>
            <person name="Oefner P."/>
            <person name="Roberts D."/>
            <person name="Schramm S."/>
            <person name="Davis R.W."/>
        </authorList>
    </citation>
    <scope>NUCLEOTIDE SEQUENCE [LARGE SCALE GENOMIC DNA]</scope>
    <source>
        <strain>K12 / MG1655 / ATCC 47076</strain>
    </source>
</reference>
<reference key="3">
    <citation type="journal article" date="1997" name="Science">
        <title>The complete genome sequence of Escherichia coli K-12.</title>
        <authorList>
            <person name="Blattner F.R."/>
            <person name="Plunkett G. III"/>
            <person name="Bloch C.A."/>
            <person name="Perna N.T."/>
            <person name="Burland V."/>
            <person name="Riley M."/>
            <person name="Collado-Vides J."/>
            <person name="Glasner J.D."/>
            <person name="Rode C.K."/>
            <person name="Mayhew G.F."/>
            <person name="Gregor J."/>
            <person name="Davis N.W."/>
            <person name="Kirkpatrick H.A."/>
            <person name="Goeden M.A."/>
            <person name="Rose D.J."/>
            <person name="Mau B."/>
            <person name="Shao Y."/>
        </authorList>
    </citation>
    <scope>NUCLEOTIDE SEQUENCE [LARGE SCALE GENOMIC DNA]</scope>
    <source>
        <strain>K12 / MG1655 / ATCC 47076</strain>
    </source>
</reference>
<reference key="4">
    <citation type="journal article" date="2006" name="Mol. Syst. Biol.">
        <title>Highly accurate genome sequences of Escherichia coli K-12 strains MG1655 and W3110.</title>
        <authorList>
            <person name="Hayashi K."/>
            <person name="Morooka N."/>
            <person name="Yamamoto Y."/>
            <person name="Fujita K."/>
            <person name="Isono K."/>
            <person name="Choi S."/>
            <person name="Ohtsubo E."/>
            <person name="Baba T."/>
            <person name="Wanner B.L."/>
            <person name="Mori H."/>
            <person name="Horiuchi T."/>
        </authorList>
    </citation>
    <scope>NUCLEOTIDE SEQUENCE [LARGE SCALE GENOMIC DNA]</scope>
    <source>
        <strain>K12 / W3110 / ATCC 27325 / DSM 5911</strain>
    </source>
</reference>
<reference key="5">
    <citation type="journal article" date="2000" name="J. Bacteriol.">
        <title>Identification of a copper-responsive two-component system on the chromosome of Escherichia coli K-12.</title>
        <authorList>
            <person name="Munson G.P."/>
            <person name="Lam D.L."/>
            <person name="Outten F.W."/>
            <person name="O'Halloran T.V."/>
        </authorList>
    </citation>
    <scope>GENE NAME</scope>
    <source>
        <strain>K12 / DH5-alpha</strain>
    </source>
</reference>
<reference key="6">
    <citation type="journal article" date="2001" name="J. Biol. Chem.">
        <title>The independent cue and cus systems confer copper tolerance during aerobic and anaerobic growth in Escherichia coli.</title>
        <authorList>
            <person name="Outten F.W."/>
            <person name="Huffman D.L."/>
            <person name="Hale J.A."/>
            <person name="O'Halloran T.V."/>
        </authorList>
    </citation>
    <scope>FUNCTION IN COPPER HOMEOSTASIS</scope>
    <source>
        <strain>K12</strain>
    </source>
</reference>
<reference key="7">
    <citation type="journal article" date="2001" name="Microbiology">
        <title>The product of the ybdE gene of the Escherichia coli chromosome is involved in detoxification of silver ions.</title>
        <authorList>
            <person name="Franke S."/>
            <person name="Grass G."/>
            <person name="Nies D.H."/>
        </authorList>
    </citation>
    <scope>INDUCTION</scope>
    <source>
        <strain>K38</strain>
    </source>
</reference>
<reference key="8">
    <citation type="journal article" date="2003" name="J. Bacteriol.">
        <title>Molecular analysis of the copper-transporting efflux system CusCFBA of Escherichia coli.</title>
        <authorList>
            <person name="Franke S."/>
            <person name="Grass G."/>
            <person name="Rensing C."/>
            <person name="Nies D.H."/>
        </authorList>
    </citation>
    <scope>FUNCTION</scope>
    <source>
        <strain>K12 / W3110 / ATCC 27325 / DSM 5911</strain>
    </source>
</reference>
<sequence length="407" mass="44305">MKKIALIIGSMIAGGIISAAGFTWVAKAEPPAEKTSTAERKILFWYDPMYPNTRFDKPGKSPFMDMDLVPKYADEESSASGVRIDPTQTQNLGVKTATVTRGPLTFAQSFPANVSYNEYQYAIVQARAAGFIDKVYPLTVGDKVQKGTPLLDLTIPDWVEAQSEYLLLRETGGTATQTEGILERLRLAGMPEADIRRLIATQKIQTRFTLKAPIDGVITAFDLRAGMNIAKDNVVAKIQGMDPVWVTAAIPESIAWLVKDASQFTLTVPARPDKTLTIRKWTLLPGVDAATRTLQLRLEVDNADEALKPGMNAWLQLNTASEPMLLIPSQALIDTGSEQRVITVDADGRFVPKRVAVFQASQGVTALRSGLAEGEKVVSSGLFLIDSEANISGALERMRSESATHAH</sequence>
<accession>P77239</accession>
<evidence type="ECO:0000255" key="1"/>
<evidence type="ECO:0000269" key="2">
    <source>
    </source>
</evidence>
<evidence type="ECO:0000269" key="3">
    <source>
    </source>
</evidence>
<evidence type="ECO:0000269" key="4">
    <source>
    </source>
</evidence>
<evidence type="ECO:0000305" key="5"/>
<evidence type="ECO:0007829" key="6">
    <source>
        <dbReference type="PDB" id="3NE5"/>
    </source>
</evidence>
<evidence type="ECO:0007829" key="7">
    <source>
        <dbReference type="PDB" id="3OOC"/>
    </source>
</evidence>
<evidence type="ECO:0007829" key="8">
    <source>
        <dbReference type="PDB" id="3T53"/>
    </source>
</evidence>
<evidence type="ECO:0007829" key="9">
    <source>
        <dbReference type="PDB" id="3T56"/>
    </source>
</evidence>
<evidence type="ECO:0007829" key="10">
    <source>
        <dbReference type="PDB" id="4DNT"/>
    </source>
</evidence>
<organism>
    <name type="scientific">Escherichia coli (strain K12)</name>
    <dbReference type="NCBI Taxonomy" id="83333"/>
    <lineage>
        <taxon>Bacteria</taxon>
        <taxon>Pseudomonadati</taxon>
        <taxon>Pseudomonadota</taxon>
        <taxon>Gammaproteobacteria</taxon>
        <taxon>Enterobacterales</taxon>
        <taxon>Enterobacteriaceae</taxon>
        <taxon>Escherichia</taxon>
    </lineage>
</organism>
<gene>
    <name type="primary">cusB</name>
    <name type="synonym">ylcD</name>
    <name type="ordered locus">b0574</name>
    <name type="ordered locus">JW0563</name>
</gene>
<dbReference type="EMBL" id="U82598">
    <property type="protein sequence ID" value="AAB40772.1"/>
    <property type="molecule type" value="Genomic_DNA"/>
</dbReference>
<dbReference type="EMBL" id="U00096">
    <property type="protein sequence ID" value="AAC73675.1"/>
    <property type="molecule type" value="Genomic_DNA"/>
</dbReference>
<dbReference type="EMBL" id="AP009048">
    <property type="protein sequence ID" value="BAA35208.1"/>
    <property type="molecule type" value="Genomic_DNA"/>
</dbReference>
<dbReference type="PIR" id="D64790">
    <property type="entry name" value="D64790"/>
</dbReference>
<dbReference type="RefSeq" id="NP_415106.1">
    <property type="nucleotide sequence ID" value="NC_000913.3"/>
</dbReference>
<dbReference type="RefSeq" id="WP_000717157.1">
    <property type="nucleotide sequence ID" value="NZ_STEB01000055.1"/>
</dbReference>
<dbReference type="PDB" id="3H94">
    <property type="method" value="X-ray"/>
    <property type="resolution" value="3.84 A"/>
    <property type="chains" value="A/B=1-407"/>
</dbReference>
<dbReference type="PDB" id="3NE5">
    <property type="method" value="X-ray"/>
    <property type="resolution" value="2.90 A"/>
    <property type="chains" value="B/C=1-407"/>
</dbReference>
<dbReference type="PDB" id="3OOC">
    <property type="method" value="X-ray"/>
    <property type="resolution" value="3.40 A"/>
    <property type="chains" value="A/B=1-407"/>
</dbReference>
<dbReference type="PDB" id="3OPO">
    <property type="method" value="X-ray"/>
    <property type="resolution" value="3.85 A"/>
    <property type="chains" value="A/B=1-407"/>
</dbReference>
<dbReference type="PDB" id="3OW7">
    <property type="method" value="X-ray"/>
    <property type="resolution" value="3.78 A"/>
    <property type="chains" value="A/B=1-407"/>
</dbReference>
<dbReference type="PDB" id="3T51">
    <property type="method" value="X-ray"/>
    <property type="resolution" value="3.90 A"/>
    <property type="chains" value="B/C=78-407"/>
</dbReference>
<dbReference type="PDB" id="3T53">
    <property type="method" value="X-ray"/>
    <property type="resolution" value="3.37 A"/>
    <property type="chains" value="B/C=78-407"/>
</dbReference>
<dbReference type="PDB" id="3T56">
    <property type="method" value="X-ray"/>
    <property type="resolution" value="3.42 A"/>
    <property type="chains" value="B/C=78-407"/>
</dbReference>
<dbReference type="PDB" id="4DNR">
    <property type="method" value="X-ray"/>
    <property type="resolution" value="3.68 A"/>
    <property type="chains" value="B/C=1-407"/>
</dbReference>
<dbReference type="PDB" id="4DNT">
    <property type="method" value="X-ray"/>
    <property type="resolution" value="3.10 A"/>
    <property type="chains" value="B/C=1-407"/>
</dbReference>
<dbReference type="PDB" id="4DOP">
    <property type="method" value="X-ray"/>
    <property type="resolution" value="4.20 A"/>
    <property type="chains" value="B/C=1-407"/>
</dbReference>
<dbReference type="PDBsum" id="3H94"/>
<dbReference type="PDBsum" id="3NE5"/>
<dbReference type="PDBsum" id="3OOC"/>
<dbReference type="PDBsum" id="3OPO"/>
<dbReference type="PDBsum" id="3OW7"/>
<dbReference type="PDBsum" id="3T51"/>
<dbReference type="PDBsum" id="3T53"/>
<dbReference type="PDBsum" id="3T56"/>
<dbReference type="PDBsum" id="4DNR"/>
<dbReference type="PDBsum" id="4DNT"/>
<dbReference type="PDBsum" id="4DOP"/>
<dbReference type="SMR" id="P77239"/>
<dbReference type="BioGRID" id="4262993">
    <property type="interactions" value="139"/>
</dbReference>
<dbReference type="BioGRID" id="849575">
    <property type="interactions" value="1"/>
</dbReference>
<dbReference type="ComplexPortal" id="CPX-2254">
    <property type="entry name" value="Cus cation efflux complex"/>
</dbReference>
<dbReference type="DIP" id="DIP-9346N"/>
<dbReference type="FunCoup" id="P77239">
    <property type="interactions" value="285"/>
</dbReference>
<dbReference type="IntAct" id="P77239">
    <property type="interactions" value="5"/>
</dbReference>
<dbReference type="STRING" id="511145.b0574"/>
<dbReference type="TCDB" id="2.A.6.1.4">
    <property type="family name" value="the resistance-nodulation-cell division (rnd) superfamily"/>
</dbReference>
<dbReference type="PaxDb" id="511145-b0574"/>
<dbReference type="EnsemblBacteria" id="AAC73675">
    <property type="protein sequence ID" value="AAC73675"/>
    <property type="gene ID" value="b0574"/>
</dbReference>
<dbReference type="GeneID" id="945189"/>
<dbReference type="KEGG" id="ecj:JW0563"/>
<dbReference type="KEGG" id="eco:b0574"/>
<dbReference type="KEGG" id="ecoc:C3026_02850"/>
<dbReference type="PATRIC" id="fig|1411691.4.peg.1700"/>
<dbReference type="EchoBASE" id="EB3986"/>
<dbReference type="eggNOG" id="COG0845">
    <property type="taxonomic scope" value="Bacteria"/>
</dbReference>
<dbReference type="HOGENOM" id="CLU_018816_13_1_6"/>
<dbReference type="InParanoid" id="P77239"/>
<dbReference type="OMA" id="EYQYVIM"/>
<dbReference type="OrthoDB" id="9806939at2"/>
<dbReference type="PhylomeDB" id="P77239"/>
<dbReference type="BioCyc" id="EcoCyc:G6322-MONOMER"/>
<dbReference type="BioCyc" id="MetaCyc:G6322-MONOMER"/>
<dbReference type="EvolutionaryTrace" id="P77239"/>
<dbReference type="PRO" id="PR:P77239"/>
<dbReference type="Proteomes" id="UP000000625">
    <property type="component" value="Chromosome"/>
</dbReference>
<dbReference type="GO" id="GO:0030313">
    <property type="term" value="C:cell envelope"/>
    <property type="evidence" value="ECO:0000318"/>
    <property type="project" value="GO_Central"/>
</dbReference>
<dbReference type="GO" id="GO:0016020">
    <property type="term" value="C:membrane"/>
    <property type="evidence" value="ECO:0007669"/>
    <property type="project" value="InterPro"/>
</dbReference>
<dbReference type="GO" id="GO:0030288">
    <property type="term" value="C:outer membrane-bounded periplasmic space"/>
    <property type="evidence" value="ECO:0000314"/>
    <property type="project" value="EcoCyc"/>
</dbReference>
<dbReference type="GO" id="GO:0005507">
    <property type="term" value="F:copper ion binding"/>
    <property type="evidence" value="ECO:0000314"/>
    <property type="project" value="EcoCyc"/>
</dbReference>
<dbReference type="GO" id="GO:0005375">
    <property type="term" value="F:copper ion transmembrane transporter activity"/>
    <property type="evidence" value="ECO:0000316"/>
    <property type="project" value="EcoCyc"/>
</dbReference>
<dbReference type="GO" id="GO:0046914">
    <property type="term" value="F:transition metal ion binding"/>
    <property type="evidence" value="ECO:0000314"/>
    <property type="project" value="EcoCyc"/>
</dbReference>
<dbReference type="GO" id="GO:0060003">
    <property type="term" value="P:copper ion export"/>
    <property type="evidence" value="ECO:0000316"/>
    <property type="project" value="EcoCyc"/>
</dbReference>
<dbReference type="GO" id="GO:0035434">
    <property type="term" value="P:copper ion transmembrane transport"/>
    <property type="evidence" value="ECO:0000303"/>
    <property type="project" value="ComplexPortal"/>
</dbReference>
<dbReference type="GO" id="GO:0010273">
    <property type="term" value="P:detoxification of copper ion"/>
    <property type="evidence" value="ECO:0000315"/>
    <property type="project" value="EcoCyc"/>
</dbReference>
<dbReference type="GO" id="GO:0006878">
    <property type="term" value="P:intracellular copper ion homeostasis"/>
    <property type="evidence" value="ECO:0000315"/>
    <property type="project" value="EcoCyc"/>
</dbReference>
<dbReference type="GO" id="GO:0015679">
    <property type="term" value="P:plasma membrane copper ion transport"/>
    <property type="evidence" value="ECO:0000316"/>
    <property type="project" value="EcoCyc"/>
</dbReference>
<dbReference type="GO" id="GO:0046688">
    <property type="term" value="P:response to copper ion"/>
    <property type="evidence" value="ECO:0000315"/>
    <property type="project" value="EcoliWiki"/>
</dbReference>
<dbReference type="GO" id="GO:0010272">
    <property type="term" value="P:response to silver ion"/>
    <property type="evidence" value="ECO:0000315"/>
    <property type="project" value="EcoCyc"/>
</dbReference>
<dbReference type="GO" id="GO:0009636">
    <property type="term" value="P:response to toxic substance"/>
    <property type="evidence" value="ECO:0000303"/>
    <property type="project" value="ComplexPortal"/>
</dbReference>
<dbReference type="GO" id="GO:1902601">
    <property type="term" value="P:silver ion transmembrane transport"/>
    <property type="evidence" value="ECO:0000303"/>
    <property type="project" value="ComplexPortal"/>
</dbReference>
<dbReference type="FunFam" id="2.40.420.20:FF:000003">
    <property type="entry name" value="Cation efflux system protein cusB"/>
    <property type="match status" value="1"/>
</dbReference>
<dbReference type="Gene3D" id="2.40.30.170">
    <property type="match status" value="1"/>
</dbReference>
<dbReference type="Gene3D" id="2.40.420.20">
    <property type="match status" value="1"/>
</dbReference>
<dbReference type="Gene3D" id="6.10.140.730">
    <property type="match status" value="1"/>
</dbReference>
<dbReference type="InterPro" id="IPR043602">
    <property type="entry name" value="CusB-like_dom_1"/>
</dbReference>
<dbReference type="InterPro" id="IPR032317">
    <property type="entry name" value="CusB_D23"/>
</dbReference>
<dbReference type="InterPro" id="IPR045800">
    <property type="entry name" value="HMBD"/>
</dbReference>
<dbReference type="InterPro" id="IPR051909">
    <property type="entry name" value="MFP_Cation_Efflux"/>
</dbReference>
<dbReference type="InterPro" id="IPR006143">
    <property type="entry name" value="RND_pump_MFP"/>
</dbReference>
<dbReference type="NCBIfam" id="NF007303">
    <property type="entry name" value="PRK09783.1"/>
    <property type="match status" value="1"/>
</dbReference>
<dbReference type="NCBIfam" id="TIGR01730">
    <property type="entry name" value="RND_mfp"/>
    <property type="match status" value="1"/>
</dbReference>
<dbReference type="PANTHER" id="PTHR30097">
    <property type="entry name" value="CATION EFFLUX SYSTEM PROTEIN CUSB"/>
    <property type="match status" value="1"/>
</dbReference>
<dbReference type="PANTHER" id="PTHR30097:SF15">
    <property type="entry name" value="CATION EFFLUX SYSTEM PROTEIN CUSB"/>
    <property type="match status" value="1"/>
</dbReference>
<dbReference type="Pfam" id="PF00529">
    <property type="entry name" value="CusB_dom_1"/>
    <property type="match status" value="1"/>
</dbReference>
<dbReference type="Pfam" id="PF16576">
    <property type="entry name" value="HlyD_D23"/>
    <property type="match status" value="1"/>
</dbReference>
<dbReference type="Pfam" id="PF19335">
    <property type="entry name" value="HMBD"/>
    <property type="match status" value="1"/>
</dbReference>
<dbReference type="SUPFAM" id="SSF111369">
    <property type="entry name" value="HlyD-like secretion proteins"/>
    <property type="match status" value="1"/>
</dbReference>
<feature type="signal peptide" evidence="1">
    <location>
        <begin position="1"/>
        <end position="28"/>
    </location>
</feature>
<feature type="chain" id="PRO_0000018690" description="Cation efflux system protein CusB">
    <location>
        <begin position="29"/>
        <end position="407"/>
    </location>
</feature>
<feature type="strand" evidence="6">
    <location>
        <begin position="96"/>
        <end position="98"/>
    </location>
</feature>
<feature type="strand" evidence="6">
    <location>
        <begin position="100"/>
        <end position="102"/>
    </location>
</feature>
<feature type="strand" evidence="6">
    <location>
        <begin position="105"/>
        <end position="124"/>
    </location>
</feature>
<feature type="strand" evidence="6">
    <location>
        <begin position="130"/>
        <end position="135"/>
    </location>
</feature>
<feature type="strand" evidence="7">
    <location>
        <begin position="143"/>
        <end position="145"/>
    </location>
</feature>
<feature type="strand" evidence="6">
    <location>
        <begin position="149"/>
        <end position="154"/>
    </location>
</feature>
<feature type="helix" evidence="6">
    <location>
        <begin position="159"/>
        <end position="170"/>
    </location>
</feature>
<feature type="helix" evidence="6">
    <location>
        <begin position="175"/>
        <end position="187"/>
    </location>
</feature>
<feature type="helix" evidence="6">
    <location>
        <begin position="192"/>
        <end position="201"/>
    </location>
</feature>
<feature type="strand" evidence="6">
    <location>
        <begin position="207"/>
        <end position="211"/>
    </location>
</feature>
<feature type="strand" evidence="6">
    <location>
        <begin position="213"/>
        <end position="220"/>
    </location>
</feature>
<feature type="strand" evidence="9">
    <location>
        <begin position="231"/>
        <end position="233"/>
    </location>
</feature>
<feature type="strand" evidence="6">
    <location>
        <begin position="235"/>
        <end position="251"/>
    </location>
</feature>
<feature type="helix" evidence="6">
    <location>
        <begin position="252"/>
        <end position="254"/>
    </location>
</feature>
<feature type="helix" evidence="6">
    <location>
        <begin position="255"/>
        <end position="258"/>
    </location>
</feature>
<feature type="helix" evidence="7">
    <location>
        <begin position="261"/>
        <end position="263"/>
    </location>
</feature>
<feature type="strand" evidence="6">
    <location>
        <begin position="264"/>
        <end position="268"/>
    </location>
</feature>
<feature type="strand" evidence="6">
    <location>
        <begin position="271"/>
        <end position="278"/>
    </location>
</feature>
<feature type="strand" evidence="10">
    <location>
        <begin position="282"/>
        <end position="288"/>
    </location>
</feature>
<feature type="turn" evidence="6">
    <location>
        <begin position="289"/>
        <end position="292"/>
    </location>
</feature>
<feature type="strand" evidence="6">
    <location>
        <begin position="293"/>
        <end position="301"/>
    </location>
</feature>
<feature type="strand" evidence="7">
    <location>
        <begin position="303"/>
        <end position="305"/>
    </location>
</feature>
<feature type="strand" evidence="6">
    <location>
        <begin position="312"/>
        <end position="320"/>
    </location>
</feature>
<feature type="strand" evidence="6">
    <location>
        <begin position="324"/>
        <end position="328"/>
    </location>
</feature>
<feature type="helix" evidence="6">
    <location>
        <begin position="329"/>
        <end position="331"/>
    </location>
</feature>
<feature type="strand" evidence="6">
    <location>
        <begin position="332"/>
        <end position="334"/>
    </location>
</feature>
<feature type="strand" evidence="7">
    <location>
        <begin position="335"/>
        <end position="337"/>
    </location>
</feature>
<feature type="strand" evidence="6">
    <location>
        <begin position="339"/>
        <end position="344"/>
    </location>
</feature>
<feature type="strand" evidence="8">
    <location>
        <begin position="346"/>
        <end position="348"/>
    </location>
</feature>
<feature type="strand" evidence="6">
    <location>
        <begin position="350"/>
        <end position="354"/>
    </location>
</feature>
<feature type="strand" evidence="6">
    <location>
        <begin position="356"/>
        <end position="361"/>
    </location>
</feature>
<feature type="strand" evidence="6">
    <location>
        <begin position="364"/>
        <end position="371"/>
    </location>
</feature>
<feature type="strand" evidence="6">
    <location>
        <begin position="376"/>
        <end position="378"/>
    </location>
</feature>
<feature type="turn" evidence="6">
    <location>
        <begin position="386"/>
        <end position="388"/>
    </location>
</feature>
<feature type="helix" evidence="6">
    <location>
        <begin position="391"/>
        <end position="396"/>
    </location>
</feature>
<comment type="function">
    <text evidence="3 4">Part of a cation efflux system that mediates resistance to copper and silver.</text>
</comment>
<comment type="subunit">
    <text>The cus efflux system is composed of CusA, CusB, CusC and CusF.</text>
</comment>
<comment type="interaction">
    <interactant intactId="EBI-1118842">
        <id>P77239</id>
    </interactant>
    <interactant intactId="EBI-1126317">
        <id>P38054</id>
        <label>cusA</label>
    </interactant>
    <organismsDiffer>false</organismsDiffer>
    <experiments>2</experiments>
</comment>
<comment type="induction">
    <text evidence="2">Transcriptionally regulated by CusR in response to copper and silver ions.</text>
</comment>
<comment type="miscellaneous">
    <text>The cus system plays an important role in copper tolerance under anaerobic growth and, under extreme copper stress, in aerobic growth.</text>
</comment>
<comment type="similarity">
    <text evidence="5">Belongs to the membrane fusion protein (MFP) (TC 8.A.1) family.</text>
</comment>
<protein>
    <recommendedName>
        <fullName>Cation efflux system protein CusB</fullName>
    </recommendedName>
</protein>